<dbReference type="EC" id="2.1.3.15" evidence="1"/>
<dbReference type="EMBL" id="CP000934">
    <property type="protein sequence ID" value="ACE84422.1"/>
    <property type="molecule type" value="Genomic_DNA"/>
</dbReference>
<dbReference type="RefSeq" id="WP_012487374.1">
    <property type="nucleotide sequence ID" value="NC_010995.1"/>
</dbReference>
<dbReference type="SMR" id="B3PFP1"/>
<dbReference type="STRING" id="498211.CJA_1753"/>
<dbReference type="KEGG" id="cja:CJA_1753"/>
<dbReference type="eggNOG" id="COG0777">
    <property type="taxonomic scope" value="Bacteria"/>
</dbReference>
<dbReference type="HOGENOM" id="CLU_015486_1_0_6"/>
<dbReference type="OrthoDB" id="9772975at2"/>
<dbReference type="UniPathway" id="UPA00655">
    <property type="reaction ID" value="UER00711"/>
</dbReference>
<dbReference type="Proteomes" id="UP000001036">
    <property type="component" value="Chromosome"/>
</dbReference>
<dbReference type="GO" id="GO:0009329">
    <property type="term" value="C:acetate CoA-transferase complex"/>
    <property type="evidence" value="ECO:0007669"/>
    <property type="project" value="TreeGrafter"/>
</dbReference>
<dbReference type="GO" id="GO:0003989">
    <property type="term" value="F:acetyl-CoA carboxylase activity"/>
    <property type="evidence" value="ECO:0007669"/>
    <property type="project" value="InterPro"/>
</dbReference>
<dbReference type="GO" id="GO:0005524">
    <property type="term" value="F:ATP binding"/>
    <property type="evidence" value="ECO:0007669"/>
    <property type="project" value="UniProtKB-KW"/>
</dbReference>
<dbReference type="GO" id="GO:0016743">
    <property type="term" value="F:carboxyl- or carbamoyltransferase activity"/>
    <property type="evidence" value="ECO:0007669"/>
    <property type="project" value="UniProtKB-UniRule"/>
</dbReference>
<dbReference type="GO" id="GO:0008270">
    <property type="term" value="F:zinc ion binding"/>
    <property type="evidence" value="ECO:0007669"/>
    <property type="project" value="UniProtKB-UniRule"/>
</dbReference>
<dbReference type="GO" id="GO:0006633">
    <property type="term" value="P:fatty acid biosynthetic process"/>
    <property type="evidence" value="ECO:0007669"/>
    <property type="project" value="UniProtKB-KW"/>
</dbReference>
<dbReference type="GO" id="GO:2001295">
    <property type="term" value="P:malonyl-CoA biosynthetic process"/>
    <property type="evidence" value="ECO:0007669"/>
    <property type="project" value="UniProtKB-UniRule"/>
</dbReference>
<dbReference type="Gene3D" id="3.90.226.10">
    <property type="entry name" value="2-enoyl-CoA Hydratase, Chain A, domain 1"/>
    <property type="match status" value="1"/>
</dbReference>
<dbReference type="HAMAP" id="MF_01395">
    <property type="entry name" value="AcetylCoA_CT_beta"/>
    <property type="match status" value="1"/>
</dbReference>
<dbReference type="InterPro" id="IPR034733">
    <property type="entry name" value="AcCoA_carboxyl_beta"/>
</dbReference>
<dbReference type="InterPro" id="IPR000438">
    <property type="entry name" value="Acetyl_CoA_COase_Trfase_b_su"/>
</dbReference>
<dbReference type="InterPro" id="IPR029045">
    <property type="entry name" value="ClpP/crotonase-like_dom_sf"/>
</dbReference>
<dbReference type="InterPro" id="IPR011762">
    <property type="entry name" value="COA_CT_N"/>
</dbReference>
<dbReference type="InterPro" id="IPR041010">
    <property type="entry name" value="Znf-ACC"/>
</dbReference>
<dbReference type="NCBIfam" id="TIGR00515">
    <property type="entry name" value="accD"/>
    <property type="match status" value="1"/>
</dbReference>
<dbReference type="PANTHER" id="PTHR42995">
    <property type="entry name" value="ACETYL-COENZYME A CARBOXYLASE CARBOXYL TRANSFERASE SUBUNIT BETA, CHLOROPLASTIC"/>
    <property type="match status" value="1"/>
</dbReference>
<dbReference type="PANTHER" id="PTHR42995:SF5">
    <property type="entry name" value="ACETYL-COENZYME A CARBOXYLASE CARBOXYL TRANSFERASE SUBUNIT BETA, CHLOROPLASTIC"/>
    <property type="match status" value="1"/>
</dbReference>
<dbReference type="Pfam" id="PF01039">
    <property type="entry name" value="Carboxyl_trans"/>
    <property type="match status" value="1"/>
</dbReference>
<dbReference type="Pfam" id="PF17848">
    <property type="entry name" value="Zn_ribbon_ACC"/>
    <property type="match status" value="1"/>
</dbReference>
<dbReference type="PRINTS" id="PR01070">
    <property type="entry name" value="ACCCTRFRASEB"/>
</dbReference>
<dbReference type="SUPFAM" id="SSF52096">
    <property type="entry name" value="ClpP/crotonase"/>
    <property type="match status" value="1"/>
</dbReference>
<dbReference type="PROSITE" id="PS50980">
    <property type="entry name" value="COA_CT_NTER"/>
    <property type="match status" value="1"/>
</dbReference>
<feature type="chain" id="PRO_0000358962" description="Acetyl-coenzyme A carboxylase carboxyl transferase subunit beta">
    <location>
        <begin position="1"/>
        <end position="286"/>
    </location>
</feature>
<feature type="domain" description="CoA carboxyltransferase N-terminal" evidence="2">
    <location>
        <begin position="26"/>
        <end position="286"/>
    </location>
</feature>
<feature type="zinc finger region" description="C4-type" evidence="1">
    <location>
        <begin position="30"/>
        <end position="52"/>
    </location>
</feature>
<feature type="binding site" evidence="1">
    <location>
        <position position="30"/>
    </location>
    <ligand>
        <name>Zn(2+)</name>
        <dbReference type="ChEBI" id="CHEBI:29105"/>
    </ligand>
</feature>
<feature type="binding site" evidence="1">
    <location>
        <position position="33"/>
    </location>
    <ligand>
        <name>Zn(2+)</name>
        <dbReference type="ChEBI" id="CHEBI:29105"/>
    </ligand>
</feature>
<feature type="binding site" evidence="1">
    <location>
        <position position="49"/>
    </location>
    <ligand>
        <name>Zn(2+)</name>
        <dbReference type="ChEBI" id="CHEBI:29105"/>
    </ligand>
</feature>
<feature type="binding site" evidence="1">
    <location>
        <position position="52"/>
    </location>
    <ligand>
        <name>Zn(2+)</name>
        <dbReference type="ChEBI" id="CHEBI:29105"/>
    </ligand>
</feature>
<comment type="function">
    <text evidence="1">Component of the acetyl coenzyme A carboxylase (ACC) complex. Biotin carboxylase (BC) catalyzes the carboxylation of biotin on its carrier protein (BCCP) and then the CO(2) group is transferred by the transcarboxylase to acetyl-CoA to form malonyl-CoA.</text>
</comment>
<comment type="catalytic activity">
    <reaction evidence="1">
        <text>N(6)-carboxybiotinyl-L-lysyl-[protein] + acetyl-CoA = N(6)-biotinyl-L-lysyl-[protein] + malonyl-CoA</text>
        <dbReference type="Rhea" id="RHEA:54728"/>
        <dbReference type="Rhea" id="RHEA-COMP:10505"/>
        <dbReference type="Rhea" id="RHEA-COMP:10506"/>
        <dbReference type="ChEBI" id="CHEBI:57288"/>
        <dbReference type="ChEBI" id="CHEBI:57384"/>
        <dbReference type="ChEBI" id="CHEBI:83144"/>
        <dbReference type="ChEBI" id="CHEBI:83145"/>
        <dbReference type="EC" id="2.1.3.15"/>
    </reaction>
</comment>
<comment type="cofactor">
    <cofactor evidence="1">
        <name>Zn(2+)</name>
        <dbReference type="ChEBI" id="CHEBI:29105"/>
    </cofactor>
    <text evidence="1">Binds 1 zinc ion per subunit.</text>
</comment>
<comment type="pathway">
    <text evidence="1">Lipid metabolism; malonyl-CoA biosynthesis; malonyl-CoA from acetyl-CoA: step 1/1.</text>
</comment>
<comment type="subunit">
    <text evidence="1">Acetyl-CoA carboxylase is a heterohexamer composed of biotin carboxyl carrier protein (AccB), biotin carboxylase (AccC) and two subunits each of ACCase subunit alpha (AccA) and ACCase subunit beta (AccD).</text>
</comment>
<comment type="subcellular location">
    <subcellularLocation>
        <location evidence="1">Cytoplasm</location>
    </subcellularLocation>
</comment>
<comment type="similarity">
    <text evidence="1">Belongs to the AccD/PCCB family.</text>
</comment>
<keyword id="KW-0067">ATP-binding</keyword>
<keyword id="KW-0963">Cytoplasm</keyword>
<keyword id="KW-0275">Fatty acid biosynthesis</keyword>
<keyword id="KW-0276">Fatty acid metabolism</keyword>
<keyword id="KW-0444">Lipid biosynthesis</keyword>
<keyword id="KW-0443">Lipid metabolism</keyword>
<keyword id="KW-0479">Metal-binding</keyword>
<keyword id="KW-0547">Nucleotide-binding</keyword>
<keyword id="KW-1185">Reference proteome</keyword>
<keyword id="KW-0808">Transferase</keyword>
<keyword id="KW-0862">Zinc</keyword>
<keyword id="KW-0863">Zinc-finger</keyword>
<organism>
    <name type="scientific">Cellvibrio japonicus (strain Ueda107)</name>
    <name type="common">Pseudomonas fluorescens subsp. cellulosa</name>
    <dbReference type="NCBI Taxonomy" id="498211"/>
    <lineage>
        <taxon>Bacteria</taxon>
        <taxon>Pseudomonadati</taxon>
        <taxon>Pseudomonadota</taxon>
        <taxon>Gammaproteobacteria</taxon>
        <taxon>Cellvibrionales</taxon>
        <taxon>Cellvibrionaceae</taxon>
        <taxon>Cellvibrio</taxon>
    </lineage>
</organism>
<sequence>MSWLEKIIPSISRTETKRSNKVPEGLWEKCVKCDAVLYKPELEKNLDVCPKCDHHMRIGARSRLNIFLDPQNRQELATDVEPVDRLKFKDIKKYKDRLSSAQKDTGEKDALIAMRGELKGMPVVAVAFEFAFHGGSMGYVVGERFTRAATVALNENIPLVCFSATGGARMQEALISLMQMAKTSAVIERLKMQGTPYVSVMTDPVYGGVSASLALLGDINVAEPGARAGFAGPSIIEQTIRQKLPKGFQRAEFLLEHGAIDMIIHRGEMRDKLASLLAKFTRRAAV</sequence>
<accession>B3PFP1</accession>
<gene>
    <name evidence="1" type="primary">accD</name>
    <name type="ordered locus">CJA_1753</name>
</gene>
<evidence type="ECO:0000255" key="1">
    <source>
        <dbReference type="HAMAP-Rule" id="MF_01395"/>
    </source>
</evidence>
<evidence type="ECO:0000255" key="2">
    <source>
        <dbReference type="PROSITE-ProRule" id="PRU01136"/>
    </source>
</evidence>
<proteinExistence type="inferred from homology"/>
<name>ACCD_CELJU</name>
<protein>
    <recommendedName>
        <fullName evidence="1">Acetyl-coenzyme A carboxylase carboxyl transferase subunit beta</fullName>
        <shortName evidence="1">ACCase subunit beta</shortName>
        <shortName evidence="1">Acetyl-CoA carboxylase carboxyltransferase subunit beta</shortName>
        <ecNumber evidence="1">2.1.3.15</ecNumber>
    </recommendedName>
</protein>
<reference key="1">
    <citation type="journal article" date="2008" name="J. Bacteriol.">
        <title>Insights into plant cell wall degradation from the genome sequence of the soil bacterium Cellvibrio japonicus.</title>
        <authorList>
            <person name="DeBoy R.T."/>
            <person name="Mongodin E.F."/>
            <person name="Fouts D.E."/>
            <person name="Tailford L.E."/>
            <person name="Khouri H."/>
            <person name="Emerson J.B."/>
            <person name="Mohamoud Y."/>
            <person name="Watkins K."/>
            <person name="Henrissat B."/>
            <person name="Gilbert H.J."/>
            <person name="Nelson K.E."/>
        </authorList>
    </citation>
    <scope>NUCLEOTIDE SEQUENCE [LARGE SCALE GENOMIC DNA]</scope>
    <source>
        <strain>Ueda107</strain>
    </source>
</reference>